<name>RS20_ALIFM</name>
<comment type="function">
    <text evidence="1">Binds directly to 16S ribosomal RNA.</text>
</comment>
<comment type="similarity">
    <text evidence="1">Belongs to the bacterial ribosomal protein bS20 family.</text>
</comment>
<sequence>MANSKSAKKRATQAERRRQHNASRRSMMRTYMKKTIAAIEAGDKEAATAALATATPLLDRMATKGLIHKNKAARHKARFTAAIKAL</sequence>
<proteinExistence type="inferred from homology"/>
<gene>
    <name evidence="1" type="primary">rpsT</name>
    <name type="ordered locus">VFMJ11_0463</name>
</gene>
<keyword id="KW-0687">Ribonucleoprotein</keyword>
<keyword id="KW-0689">Ribosomal protein</keyword>
<keyword id="KW-0694">RNA-binding</keyword>
<keyword id="KW-0699">rRNA-binding</keyword>
<feature type="chain" id="PRO_1000126532" description="Small ribosomal subunit protein bS20">
    <location>
        <begin position="1"/>
        <end position="86"/>
    </location>
</feature>
<feature type="region of interest" description="Disordered" evidence="2">
    <location>
        <begin position="1"/>
        <end position="28"/>
    </location>
</feature>
<feature type="compositionally biased region" description="Basic residues" evidence="2">
    <location>
        <begin position="1"/>
        <end position="27"/>
    </location>
</feature>
<organism>
    <name type="scientific">Aliivibrio fischeri (strain MJ11)</name>
    <name type="common">Vibrio fischeri</name>
    <dbReference type="NCBI Taxonomy" id="388396"/>
    <lineage>
        <taxon>Bacteria</taxon>
        <taxon>Pseudomonadati</taxon>
        <taxon>Pseudomonadota</taxon>
        <taxon>Gammaproteobacteria</taxon>
        <taxon>Vibrionales</taxon>
        <taxon>Vibrionaceae</taxon>
        <taxon>Aliivibrio</taxon>
    </lineage>
</organism>
<protein>
    <recommendedName>
        <fullName evidence="1">Small ribosomal subunit protein bS20</fullName>
    </recommendedName>
    <alternativeName>
        <fullName evidence="3">30S ribosomal protein S20</fullName>
    </alternativeName>
</protein>
<dbReference type="EMBL" id="CP001139">
    <property type="protein sequence ID" value="ACH67183.1"/>
    <property type="molecule type" value="Genomic_DNA"/>
</dbReference>
<dbReference type="RefSeq" id="WP_005417629.1">
    <property type="nucleotide sequence ID" value="NC_011184.1"/>
</dbReference>
<dbReference type="SMR" id="B5FA57"/>
<dbReference type="GeneID" id="56275126"/>
<dbReference type="KEGG" id="vfm:VFMJ11_0463"/>
<dbReference type="HOGENOM" id="CLU_160655_4_0_6"/>
<dbReference type="Proteomes" id="UP000001857">
    <property type="component" value="Chromosome I"/>
</dbReference>
<dbReference type="GO" id="GO:0005829">
    <property type="term" value="C:cytosol"/>
    <property type="evidence" value="ECO:0007669"/>
    <property type="project" value="TreeGrafter"/>
</dbReference>
<dbReference type="GO" id="GO:0015935">
    <property type="term" value="C:small ribosomal subunit"/>
    <property type="evidence" value="ECO:0007669"/>
    <property type="project" value="TreeGrafter"/>
</dbReference>
<dbReference type="GO" id="GO:0070181">
    <property type="term" value="F:small ribosomal subunit rRNA binding"/>
    <property type="evidence" value="ECO:0007669"/>
    <property type="project" value="TreeGrafter"/>
</dbReference>
<dbReference type="GO" id="GO:0003735">
    <property type="term" value="F:structural constituent of ribosome"/>
    <property type="evidence" value="ECO:0007669"/>
    <property type="project" value="InterPro"/>
</dbReference>
<dbReference type="GO" id="GO:0006412">
    <property type="term" value="P:translation"/>
    <property type="evidence" value="ECO:0007669"/>
    <property type="project" value="UniProtKB-UniRule"/>
</dbReference>
<dbReference type="FunFam" id="1.20.58.110:FF:000001">
    <property type="entry name" value="30S ribosomal protein S20"/>
    <property type="match status" value="1"/>
</dbReference>
<dbReference type="Gene3D" id="1.20.58.110">
    <property type="entry name" value="Ribosomal protein S20"/>
    <property type="match status" value="1"/>
</dbReference>
<dbReference type="HAMAP" id="MF_00500">
    <property type="entry name" value="Ribosomal_bS20"/>
    <property type="match status" value="1"/>
</dbReference>
<dbReference type="InterPro" id="IPR002583">
    <property type="entry name" value="Ribosomal_bS20"/>
</dbReference>
<dbReference type="InterPro" id="IPR036510">
    <property type="entry name" value="Ribosomal_bS20_sf"/>
</dbReference>
<dbReference type="NCBIfam" id="TIGR00029">
    <property type="entry name" value="S20"/>
    <property type="match status" value="1"/>
</dbReference>
<dbReference type="PANTHER" id="PTHR33398">
    <property type="entry name" value="30S RIBOSOMAL PROTEIN S20"/>
    <property type="match status" value="1"/>
</dbReference>
<dbReference type="PANTHER" id="PTHR33398:SF1">
    <property type="entry name" value="SMALL RIBOSOMAL SUBUNIT PROTEIN BS20C"/>
    <property type="match status" value="1"/>
</dbReference>
<dbReference type="Pfam" id="PF01649">
    <property type="entry name" value="Ribosomal_S20p"/>
    <property type="match status" value="1"/>
</dbReference>
<dbReference type="SUPFAM" id="SSF46992">
    <property type="entry name" value="Ribosomal protein S20"/>
    <property type="match status" value="1"/>
</dbReference>
<accession>B5FA57</accession>
<reference key="1">
    <citation type="submission" date="2008-08" db="EMBL/GenBank/DDBJ databases">
        <title>Complete sequence of Vibrio fischeri strain MJ11.</title>
        <authorList>
            <person name="Mandel M.J."/>
            <person name="Stabb E.V."/>
            <person name="Ruby E.G."/>
            <person name="Ferriera S."/>
            <person name="Johnson J."/>
            <person name="Kravitz S."/>
            <person name="Beeson K."/>
            <person name="Sutton G."/>
            <person name="Rogers Y.-H."/>
            <person name="Friedman R."/>
            <person name="Frazier M."/>
            <person name="Venter J.C."/>
        </authorList>
    </citation>
    <scope>NUCLEOTIDE SEQUENCE [LARGE SCALE GENOMIC DNA]</scope>
    <source>
        <strain>MJ11</strain>
    </source>
</reference>
<evidence type="ECO:0000255" key="1">
    <source>
        <dbReference type="HAMAP-Rule" id="MF_00500"/>
    </source>
</evidence>
<evidence type="ECO:0000256" key="2">
    <source>
        <dbReference type="SAM" id="MobiDB-lite"/>
    </source>
</evidence>
<evidence type="ECO:0000305" key="3"/>